<evidence type="ECO:0000250" key="1"/>
<evidence type="ECO:0000269" key="2">
    <source>
    </source>
</evidence>
<evidence type="ECO:0000269" key="3">
    <source>
    </source>
</evidence>
<evidence type="ECO:0000269" key="4">
    <source>
    </source>
</evidence>
<evidence type="ECO:0000269" key="5">
    <source>
    </source>
</evidence>
<evidence type="ECO:0000269" key="6">
    <source>
    </source>
</evidence>
<evidence type="ECO:0000269" key="7">
    <source>
    </source>
</evidence>
<evidence type="ECO:0000269" key="8">
    <source>
    </source>
</evidence>
<evidence type="ECO:0000269" key="9">
    <source>
    </source>
</evidence>
<evidence type="ECO:0000269" key="10">
    <source>
    </source>
</evidence>
<evidence type="ECO:0000305" key="11"/>
<dbReference type="EMBL" id="AF095912">
    <property type="protein sequence ID" value="AAC69601.1"/>
    <property type="molecule type" value="Genomic_DNA"/>
</dbReference>
<dbReference type="EMBL" id="AF507910">
    <property type="protein sequence ID" value="AAM53242.1"/>
    <property type="molecule type" value="mRNA"/>
</dbReference>
<dbReference type="EMBL" id="AB026649">
    <property type="protein sequence ID" value="BAB01081.1"/>
    <property type="molecule type" value="Genomic_DNA"/>
</dbReference>
<dbReference type="EMBL" id="CP002686">
    <property type="protein sequence ID" value="AEE77253.1"/>
    <property type="molecule type" value="Genomic_DNA"/>
</dbReference>
<dbReference type="EMBL" id="BK000428">
    <property type="protein sequence ID" value="DAA00034.1"/>
    <property type="molecule type" value="Genomic_DNA"/>
</dbReference>
<dbReference type="RefSeq" id="NP_189336.1">
    <property type="nucleotide sequence ID" value="NM_113614.3"/>
</dbReference>
<dbReference type="SMR" id="Q9LSD6"/>
<dbReference type="BioGRID" id="7647">
    <property type="interactions" value="2"/>
</dbReference>
<dbReference type="FunCoup" id="Q9LSD6">
    <property type="interactions" value="4326"/>
</dbReference>
<dbReference type="IntAct" id="Q9LSD6">
    <property type="interactions" value="2"/>
</dbReference>
<dbReference type="STRING" id="3702.Q9LSD6"/>
<dbReference type="PaxDb" id="3702-AT3G27000.1"/>
<dbReference type="ProteomicsDB" id="246889"/>
<dbReference type="EnsemblPlants" id="AT3G27000.1">
    <property type="protein sequence ID" value="AT3G27000.1"/>
    <property type="gene ID" value="AT3G27000"/>
</dbReference>
<dbReference type="GeneID" id="822317"/>
<dbReference type="Gramene" id="AT3G27000.1">
    <property type="protein sequence ID" value="AT3G27000.1"/>
    <property type="gene ID" value="AT3G27000"/>
</dbReference>
<dbReference type="KEGG" id="ath:AT3G27000"/>
<dbReference type="Araport" id="AT3G27000"/>
<dbReference type="TAIR" id="AT3G27000">
    <property type="gene designation" value="ARP2"/>
</dbReference>
<dbReference type="eggNOG" id="KOG0677">
    <property type="taxonomic scope" value="Eukaryota"/>
</dbReference>
<dbReference type="HOGENOM" id="CLU_027965_0_2_1"/>
<dbReference type="InParanoid" id="Q9LSD6"/>
<dbReference type="OMA" id="WEDMQHL"/>
<dbReference type="OrthoDB" id="5132116at2759"/>
<dbReference type="PhylomeDB" id="Q9LSD6"/>
<dbReference type="PRO" id="PR:Q9LSD6"/>
<dbReference type="Proteomes" id="UP000006548">
    <property type="component" value="Chromosome 3"/>
</dbReference>
<dbReference type="ExpressionAtlas" id="Q9LSD6">
    <property type="expression patterns" value="baseline and differential"/>
</dbReference>
<dbReference type="GO" id="GO:0005885">
    <property type="term" value="C:Arp2/3 protein complex"/>
    <property type="evidence" value="ECO:0000304"/>
    <property type="project" value="TAIR"/>
</dbReference>
<dbReference type="GO" id="GO:0005737">
    <property type="term" value="C:cytoplasm"/>
    <property type="evidence" value="ECO:0007669"/>
    <property type="project" value="UniProtKB-KW"/>
</dbReference>
<dbReference type="GO" id="GO:0003779">
    <property type="term" value="F:actin binding"/>
    <property type="evidence" value="ECO:0007669"/>
    <property type="project" value="UniProtKB-KW"/>
</dbReference>
<dbReference type="GO" id="GO:0005524">
    <property type="term" value="F:ATP binding"/>
    <property type="evidence" value="ECO:0007669"/>
    <property type="project" value="UniProtKB-KW"/>
</dbReference>
<dbReference type="GO" id="GO:0030036">
    <property type="term" value="P:actin cytoskeleton organization"/>
    <property type="evidence" value="ECO:0000304"/>
    <property type="project" value="TAIR"/>
</dbReference>
<dbReference type="GO" id="GO:0007015">
    <property type="term" value="P:actin filament organization"/>
    <property type="evidence" value="ECO:0000315"/>
    <property type="project" value="TAIR"/>
</dbReference>
<dbReference type="GO" id="GO:0030029">
    <property type="term" value="P:actin filament-based process"/>
    <property type="evidence" value="ECO:0000304"/>
    <property type="project" value="TAIR"/>
</dbReference>
<dbReference type="GO" id="GO:0000902">
    <property type="term" value="P:cell morphogenesis"/>
    <property type="evidence" value="ECO:0000315"/>
    <property type="project" value="TAIR"/>
</dbReference>
<dbReference type="GO" id="GO:0009825">
    <property type="term" value="P:multidimensional cell growth"/>
    <property type="evidence" value="ECO:0000315"/>
    <property type="project" value="TAIR"/>
</dbReference>
<dbReference type="GO" id="GO:0010090">
    <property type="term" value="P:trichome morphogenesis"/>
    <property type="evidence" value="ECO:0000315"/>
    <property type="project" value="TAIR"/>
</dbReference>
<dbReference type="CDD" id="cd10220">
    <property type="entry name" value="ASKHA_NBD_Arp2"/>
    <property type="match status" value="1"/>
</dbReference>
<dbReference type="FunFam" id="3.30.420.40:FF:000148">
    <property type="entry name" value="Actin, alpha skeletal muscle"/>
    <property type="match status" value="1"/>
</dbReference>
<dbReference type="FunFam" id="3.90.640.10:FF:000005">
    <property type="entry name" value="Actin-related protein 2"/>
    <property type="match status" value="1"/>
</dbReference>
<dbReference type="Gene3D" id="3.30.420.40">
    <property type="match status" value="2"/>
</dbReference>
<dbReference type="Gene3D" id="3.90.640.10">
    <property type="entry name" value="Actin, Chain A, domain 4"/>
    <property type="match status" value="1"/>
</dbReference>
<dbReference type="InterPro" id="IPR004000">
    <property type="entry name" value="Actin"/>
</dbReference>
<dbReference type="InterPro" id="IPR043129">
    <property type="entry name" value="ATPase_NBD"/>
</dbReference>
<dbReference type="PANTHER" id="PTHR11937">
    <property type="entry name" value="ACTIN"/>
    <property type="match status" value="1"/>
</dbReference>
<dbReference type="Pfam" id="PF00022">
    <property type="entry name" value="Actin"/>
    <property type="match status" value="1"/>
</dbReference>
<dbReference type="PRINTS" id="PR00190">
    <property type="entry name" value="ACTIN"/>
</dbReference>
<dbReference type="SMART" id="SM00268">
    <property type="entry name" value="ACTIN"/>
    <property type="match status" value="1"/>
</dbReference>
<dbReference type="SUPFAM" id="SSF53067">
    <property type="entry name" value="Actin-like ATPase domain"/>
    <property type="match status" value="2"/>
</dbReference>
<comment type="function">
    <text evidence="1 3 5 6 7 8">Functions as ATP-binding component of the Arp2/3 complex which is involved in regulation of actin polymerization and together with an activating nucleation-promoting factor (NPF) mediates the formation of branched actin networks. Seems to contact the pointed end of the daughter actin filament (By similarity). Arp2/3 complex plays a critical role in the control of cell morphogenesis via the modulation of cell polarity development. Involved in the control of cell morphogenesis in leaf epidermal pavement cells, root hairs, hypocotyls epidermal cells and trichomes, especially during rapid cell expansion. Regulates the directionality of cell expansion by regulating the actin organization, and thus the microtubules distribution and the fusion of small vacuoles.</text>
</comment>
<comment type="subunit">
    <text evidence="10">Component of the Arp2/3 complex composed of ARP2, ARP3, ARPC1/p41-ARC, ARPC2/p34-ARC, ARPC3/p21-ARC, ARPC4/p20-ARC and ARPC5/p16-ARC. Interacts directly with ARP3/DIS1 and ABI1.</text>
</comment>
<comment type="subcellular location">
    <subcellularLocation>
        <location evidence="1">Cytoplasm</location>
        <location evidence="1">Cytoskeleton</location>
    </subcellularLocation>
</comment>
<comment type="tissue specificity">
    <text evidence="2 4 8 9">Expressed at low levels in roots, seedlings, stems, leaves, flowers, pollen, siliques and at a higher level in inflorescences. Specifically localized in cells adjacent to mature xylem and in developing xylem vessels.</text>
</comment>
<comment type="induction">
    <text evidence="2">Repressed by light.</text>
</comment>
<comment type="disruption phenotype">
    <text evidence="6 7 8">Distorted trichomes and altered epidermal cell types.</text>
</comment>
<comment type="miscellaneous">
    <text>'Wurm' means 'worm' in German. Plants impaired in WURM display worm-shaped trichomes.</text>
</comment>
<comment type="similarity">
    <text evidence="11">Belongs to the actin family. ARP2 subfamily.</text>
</comment>
<sequence length="389" mass="44356">MDNKNVVVCDNGTGYVKCGFAGENFPTSVFPCVVGRPLLRYEESLMEQQVKDIVVGETCSELRHQLDINYPVHNGIVQNWDDMEHVWDHAFYNELKINPSDCKILLTDPPLNPSKNREKMIETMFEKYNFAGVFIQIQAVLTLYAQGLLTGLVIDSGDGVTHVVPVVDGYSFPHLTKRMNVAGRHITAYLVDLLSRRGYAMNKTADFETVREIKEKLCYISYDYKRESQLGLETTILVKNYTLPDGRVIKVGTERFQAPEALFTPELIDVEGDGMADMVFRCIQEMDIDNRMMLYQHIVLSGGSTMYPGLPSRLEKEIQDRYLDTVLKGNKDGLKKLRLRIEDPPRRKHMVYLGGAVLAGIMKDAPEFWINREDYMEEGINCLNKMSQA</sequence>
<accession>Q9LSD6</accession>
<accession>Q9ZSS8</accession>
<keyword id="KW-0009">Actin-binding</keyword>
<keyword id="KW-0067">ATP-binding</keyword>
<keyword id="KW-0963">Cytoplasm</keyword>
<keyword id="KW-0206">Cytoskeleton</keyword>
<keyword id="KW-0217">Developmental protein</keyword>
<keyword id="KW-0547">Nucleotide-binding</keyword>
<keyword id="KW-1185">Reference proteome</keyword>
<gene>
    <name type="primary">ARP2</name>
    <name type="synonym">WRM</name>
    <name type="ordered locus">At3g27000</name>
    <name type="ORF">MOJ10.7</name>
</gene>
<proteinExistence type="evidence at protein level"/>
<reference key="1">
    <citation type="journal article" date="1999" name="Plant Mol. Biol.">
        <title>The Arabidopsis ACTIN-RELATED PROTEIN 2 (AtARP2) promoter directs expression in xylem precursor cells and pollen.</title>
        <authorList>
            <person name="Klahre U."/>
            <person name="Chua N.-H."/>
        </authorList>
    </citation>
    <scope>NUCLEOTIDE SEQUENCE [GENOMIC DNA]</scope>
    <scope>INDUCTION BY LIGHT</scope>
    <scope>TISSUE SPECIFICITY</scope>
    <source>
        <strain>cv. Landsberg erecta</strain>
    </source>
</reference>
<reference key="2">
    <citation type="journal article" date="2002" name="Plant Physiol.">
        <title>Arabidopsis contains ancient classes of differentially expressed actin-related protein genes.</title>
        <authorList>
            <person name="McKinney E.C."/>
            <person name="Kandasamy M.K."/>
            <person name="Meagher R.B."/>
        </authorList>
    </citation>
    <scope>NUCLEOTIDE SEQUENCE [MRNA]</scope>
    <scope>IDENTIFICATION</scope>
    <scope>TISSUE SPECIFICITY</scope>
    <scope>GENE FAMILY</scope>
    <source>
        <strain>cv. Columbia</strain>
    </source>
</reference>
<reference key="3">
    <citation type="journal article" date="2000" name="DNA Res.">
        <title>Structural analysis of Arabidopsis thaliana chromosome 3. I. Sequence features of the regions of 4,504,864 bp covered by sixty P1 and TAC clones.</title>
        <authorList>
            <person name="Sato S."/>
            <person name="Nakamura Y."/>
            <person name="Kaneko T."/>
            <person name="Katoh T."/>
            <person name="Asamizu E."/>
            <person name="Tabata S."/>
        </authorList>
    </citation>
    <scope>NUCLEOTIDE SEQUENCE [LARGE SCALE GENOMIC DNA]</scope>
    <source>
        <strain>cv. Columbia</strain>
    </source>
</reference>
<reference key="4">
    <citation type="journal article" date="2017" name="Plant J.">
        <title>Araport11: a complete reannotation of the Arabidopsis thaliana reference genome.</title>
        <authorList>
            <person name="Cheng C.Y."/>
            <person name="Krishnakumar V."/>
            <person name="Chan A.P."/>
            <person name="Thibaud-Nissen F."/>
            <person name="Schobel S."/>
            <person name="Town C.D."/>
        </authorList>
    </citation>
    <scope>GENOME REANNOTATION</scope>
    <source>
        <strain>cv. Columbia</strain>
    </source>
</reference>
<reference key="5">
    <citation type="journal article" date="1999" name="Development">
        <title>The actin cytoskeleton is required to elaborate and maintain spatial patterning during trichome cell morphogenesis in Arabidopsis thaliana.</title>
        <authorList>
            <person name="Mathur J."/>
            <person name="Spielhofer P."/>
            <person name="Kost B."/>
            <person name="Chua N.-H."/>
        </authorList>
    </citation>
    <scope>FUNCTION</scope>
</reference>
<reference key="6">
    <citation type="journal article" date="2003" name="Curr. Biol.">
        <title>Requirements for Arabidopsis ATARP2 and ATARP3 during epidermal development.</title>
        <authorList>
            <person name="Le J."/>
            <person name="El-Din El-Assal S."/>
            <person name="Basu D."/>
            <person name="Saad M.E."/>
            <person name="Szymanski D.B."/>
        </authorList>
    </citation>
    <scope>FUNCTION</scope>
    <scope>DISRUPTION PHENOTYPE</scope>
</reference>
<reference key="7">
    <citation type="journal article" date="2003" name="Mol. Genet. Genomics">
        <title>Regulation of cell expansion by the DISTORTED genes in Arabidopsis thaliana: actin controls the spatial organization of microtubules.</title>
        <authorList>
            <person name="Schwab B."/>
            <person name="Mathur J."/>
            <person name="Saedler R."/>
            <person name="Schwarz H."/>
            <person name="Frey B."/>
            <person name="Scheidegger C."/>
            <person name="Huelskamp M."/>
        </authorList>
    </citation>
    <scope>FUNCTION</scope>
</reference>
<reference key="8">
    <citation type="journal article" date="2003" name="Plant Cell">
        <title>Mutations in actin-related proteins 2 and 3 affect cell shape development in Arabidopsis.</title>
        <authorList>
            <person name="Mathur J."/>
            <person name="Mathur N."/>
            <person name="Kernebeck B."/>
            <person name="Huelskamp M."/>
        </authorList>
    </citation>
    <scope>FUNCTION</scope>
    <scope>MUTAGENESIS OF GLY-151</scope>
    <scope>DISRUPTION PHENOTYPE</scope>
</reference>
<reference key="9">
    <citation type="journal article" date="2003" name="Plant Physiol.">
        <title>The putative Arabidopsis arp2/3 complex controls leaf cell morphogenesis.</title>
        <authorList>
            <person name="Li S."/>
            <person name="Blanchoin L."/>
            <person name="Yang Z."/>
            <person name="Lord E.M."/>
        </authorList>
    </citation>
    <scope>FUNCTION</scope>
    <scope>TISSUE SPECIFICITY</scope>
    <scope>IDENTIFICATION OF THE ARP2/3 COMPLEX</scope>
    <scope>DISRUPTION PHENOTYPE</scope>
</reference>
<reference key="10">
    <citation type="journal article" date="2004" name="Plant J.">
        <title>DISTORTED2 encodes an ARPC2 subunit of the putative Arabidopsis ARP2/3 complex.</title>
        <authorList>
            <person name="El-Din El-Assal S."/>
            <person name="Le J."/>
            <person name="Basu D."/>
            <person name="Mallery E.L."/>
            <person name="Szymanski D.B."/>
        </authorList>
    </citation>
    <scope>TISSUE SPECIFICITY</scope>
</reference>
<reference key="11">
    <citation type="journal article" date="2004" name="Trends Plant Sci.">
        <title>Plant actin-related proteins.</title>
        <authorList>
            <person name="Kandasamy M.K."/>
            <person name="Deal R.B."/>
            <person name="McKinney E.C."/>
            <person name="Meagher R.B."/>
        </authorList>
    </citation>
    <scope>REVIEW</scope>
    <scope>GENE FAMILY</scope>
    <scope>NOMENCLATURE</scope>
</reference>
<reference key="12">
    <citation type="journal article" date="2005" name="Curr. Opin. Plant Biol.">
        <title>Breaking the WAVE complex: the point of Arabidopsis trichomes.</title>
        <authorList>
            <person name="Szymanski D.B."/>
        </authorList>
    </citation>
    <scope>REVIEW</scope>
</reference>
<reference key="13">
    <citation type="journal article" date="2007" name="Development">
        <title>The role of Arabidopsis SCAR genes in ARP2-ARP3-dependent cell morphogenesis.</title>
        <authorList>
            <person name="Uhrig J.F."/>
            <person name="Mutondo M."/>
            <person name="Zimmermann I."/>
            <person name="Deeks M.J."/>
            <person name="Machesky L.M."/>
            <person name="Thomas P."/>
            <person name="Uhrig S."/>
            <person name="Rambke C."/>
            <person name="Hussey P.J."/>
            <person name="Huelskamp M."/>
        </authorList>
    </citation>
    <scope>INTERACTION WITH ARP3 AND ABI1</scope>
</reference>
<feature type="chain" id="PRO_0000320522" description="Actin-related protein 2">
    <location>
        <begin position="1"/>
        <end position="389"/>
    </location>
</feature>
<feature type="binding site" evidence="1">
    <location>
        <begin position="157"/>
        <end position="159"/>
    </location>
    <ligand>
        <name>ATP</name>
        <dbReference type="ChEBI" id="CHEBI:30616"/>
    </ligand>
</feature>
<feature type="binding site" evidence="1">
    <location>
        <begin position="211"/>
        <end position="215"/>
    </location>
    <ligand>
        <name>ATP</name>
        <dbReference type="ChEBI" id="CHEBI:30616"/>
    </ligand>
</feature>
<feature type="binding site" evidence="1">
    <location>
        <begin position="302"/>
        <end position="307"/>
    </location>
    <ligand>
        <name>ATP</name>
        <dbReference type="ChEBI" id="CHEBI:30616"/>
    </ligand>
</feature>
<feature type="mutagenesis site" description="In wrm1-1; distorted trichomes and epidermal cells." evidence="6">
    <original>G</original>
    <variation>D</variation>
    <location>
        <position position="151"/>
    </location>
</feature>
<feature type="sequence conflict" description="In Ref. 1; AAC69601." evidence="11" ref="1">
    <original>L</original>
    <variation>Q</variation>
    <location>
        <position position="149"/>
    </location>
</feature>
<feature type="sequence conflict" description="In Ref. 1; AAC69601." evidence="11" ref="1">
    <original>D</original>
    <variation>G</variation>
    <location>
        <position position="158"/>
    </location>
</feature>
<feature type="sequence conflict" description="In Ref. 1; AAC69601." evidence="11" ref="1">
    <original>P</original>
    <variation>R</variation>
    <location>
        <position position="259"/>
    </location>
</feature>
<feature type="sequence conflict" description="In Ref. 1; AAC69601." evidence="11" ref="1">
    <original>K</original>
    <variation>I</variation>
    <location>
        <position position="348"/>
    </location>
</feature>
<name>ARP2_ARATH</name>
<protein>
    <recommendedName>
        <fullName>Actin-related protein 2</fullName>
    </recommendedName>
    <alternativeName>
        <fullName>Protein WURM</fullName>
    </alternativeName>
</protein>
<organism>
    <name type="scientific">Arabidopsis thaliana</name>
    <name type="common">Mouse-ear cress</name>
    <dbReference type="NCBI Taxonomy" id="3702"/>
    <lineage>
        <taxon>Eukaryota</taxon>
        <taxon>Viridiplantae</taxon>
        <taxon>Streptophyta</taxon>
        <taxon>Embryophyta</taxon>
        <taxon>Tracheophyta</taxon>
        <taxon>Spermatophyta</taxon>
        <taxon>Magnoliopsida</taxon>
        <taxon>eudicotyledons</taxon>
        <taxon>Gunneridae</taxon>
        <taxon>Pentapetalae</taxon>
        <taxon>rosids</taxon>
        <taxon>malvids</taxon>
        <taxon>Brassicales</taxon>
        <taxon>Brassicaceae</taxon>
        <taxon>Camelineae</taxon>
        <taxon>Arabidopsis</taxon>
    </lineage>
</organism>